<keyword id="KW-0030">Aminoacyl-tRNA synthetase</keyword>
<keyword id="KW-0067">ATP-binding</keyword>
<keyword id="KW-0963">Cytoplasm</keyword>
<keyword id="KW-0436">Ligase</keyword>
<keyword id="KW-0479">Metal-binding</keyword>
<keyword id="KW-0547">Nucleotide-binding</keyword>
<keyword id="KW-0648">Protein biosynthesis</keyword>
<keyword id="KW-1185">Reference proteome</keyword>
<keyword id="KW-0694">RNA-binding</keyword>
<keyword id="KW-0820">tRNA-binding</keyword>
<keyword id="KW-0862">Zinc</keyword>
<organism>
    <name type="scientific">Caldivirga maquilingensis (strain ATCC 700844 / DSM 13496 / JCM 10307 / IC-167)</name>
    <dbReference type="NCBI Taxonomy" id="397948"/>
    <lineage>
        <taxon>Archaea</taxon>
        <taxon>Thermoproteota</taxon>
        <taxon>Thermoprotei</taxon>
        <taxon>Thermoproteales</taxon>
        <taxon>Thermoproteaceae</taxon>
        <taxon>Caldivirga</taxon>
    </lineage>
</organism>
<dbReference type="EC" id="6.1.1.7" evidence="1"/>
<dbReference type="EMBL" id="CP000852">
    <property type="protein sequence ID" value="ABW02715.1"/>
    <property type="molecule type" value="Genomic_DNA"/>
</dbReference>
<dbReference type="RefSeq" id="WP_012186934.1">
    <property type="nucleotide sequence ID" value="NC_009954.1"/>
</dbReference>
<dbReference type="SMR" id="A8MBI2"/>
<dbReference type="STRING" id="397948.Cmaq_1898"/>
<dbReference type="GeneID" id="5709981"/>
<dbReference type="KEGG" id="cma:Cmaq_1898"/>
<dbReference type="eggNOG" id="arCOG01255">
    <property type="taxonomic scope" value="Archaea"/>
</dbReference>
<dbReference type="HOGENOM" id="CLU_004485_4_0_2"/>
<dbReference type="OrthoDB" id="7506at2157"/>
<dbReference type="Proteomes" id="UP000001137">
    <property type="component" value="Chromosome"/>
</dbReference>
<dbReference type="GO" id="GO:0005737">
    <property type="term" value="C:cytoplasm"/>
    <property type="evidence" value="ECO:0007669"/>
    <property type="project" value="UniProtKB-SubCell"/>
</dbReference>
<dbReference type="GO" id="GO:0004813">
    <property type="term" value="F:alanine-tRNA ligase activity"/>
    <property type="evidence" value="ECO:0007669"/>
    <property type="project" value="UniProtKB-UniRule"/>
</dbReference>
<dbReference type="GO" id="GO:0002161">
    <property type="term" value="F:aminoacyl-tRNA deacylase activity"/>
    <property type="evidence" value="ECO:0007669"/>
    <property type="project" value="UniProtKB-ARBA"/>
</dbReference>
<dbReference type="GO" id="GO:0005524">
    <property type="term" value="F:ATP binding"/>
    <property type="evidence" value="ECO:0007669"/>
    <property type="project" value="UniProtKB-UniRule"/>
</dbReference>
<dbReference type="GO" id="GO:0000049">
    <property type="term" value="F:tRNA binding"/>
    <property type="evidence" value="ECO:0007669"/>
    <property type="project" value="UniProtKB-KW"/>
</dbReference>
<dbReference type="GO" id="GO:0008270">
    <property type="term" value="F:zinc ion binding"/>
    <property type="evidence" value="ECO:0007669"/>
    <property type="project" value="UniProtKB-UniRule"/>
</dbReference>
<dbReference type="GO" id="GO:0006419">
    <property type="term" value="P:alanyl-tRNA aminoacylation"/>
    <property type="evidence" value="ECO:0007669"/>
    <property type="project" value="UniProtKB-UniRule"/>
</dbReference>
<dbReference type="CDD" id="cd00673">
    <property type="entry name" value="AlaRS_core"/>
    <property type="match status" value="1"/>
</dbReference>
<dbReference type="FunFam" id="3.30.54.20:FF:000005">
    <property type="entry name" value="Alanine--tRNA ligase"/>
    <property type="match status" value="1"/>
</dbReference>
<dbReference type="FunFam" id="3.30.930.10:FF:000056">
    <property type="entry name" value="Alanine--tRNA ligase"/>
    <property type="match status" value="1"/>
</dbReference>
<dbReference type="FunFam" id="3.30.980.10:FF:000004">
    <property type="entry name" value="Alanine--tRNA ligase, cytoplasmic"/>
    <property type="match status" value="1"/>
</dbReference>
<dbReference type="Gene3D" id="2.40.30.130">
    <property type="match status" value="1"/>
</dbReference>
<dbReference type="Gene3D" id="3.30.54.20">
    <property type="match status" value="1"/>
</dbReference>
<dbReference type="Gene3D" id="6.10.250.550">
    <property type="match status" value="1"/>
</dbReference>
<dbReference type="Gene3D" id="3.30.930.10">
    <property type="entry name" value="Bira Bifunctional Protein, Domain 2"/>
    <property type="match status" value="1"/>
</dbReference>
<dbReference type="Gene3D" id="3.30.980.10">
    <property type="entry name" value="Threonyl-trna Synthetase, Chain A, domain 2"/>
    <property type="match status" value="1"/>
</dbReference>
<dbReference type="HAMAP" id="MF_00036_A">
    <property type="entry name" value="Ala_tRNA_synth_A"/>
    <property type="match status" value="1"/>
</dbReference>
<dbReference type="InterPro" id="IPR045864">
    <property type="entry name" value="aa-tRNA-synth_II/BPL/LPL"/>
</dbReference>
<dbReference type="InterPro" id="IPR002318">
    <property type="entry name" value="Ala-tRNA-lgiase_IIc"/>
</dbReference>
<dbReference type="InterPro" id="IPR018162">
    <property type="entry name" value="Ala-tRNA-ligase_IIc_anticod-bd"/>
</dbReference>
<dbReference type="InterPro" id="IPR018165">
    <property type="entry name" value="Ala-tRNA-synth_IIc_core"/>
</dbReference>
<dbReference type="InterPro" id="IPR018164">
    <property type="entry name" value="Ala-tRNA-synth_IIc_N"/>
</dbReference>
<dbReference type="InterPro" id="IPR022429">
    <property type="entry name" value="Ala-tRNA_lgiase_arc"/>
</dbReference>
<dbReference type="InterPro" id="IPR050058">
    <property type="entry name" value="Ala-tRNA_ligase"/>
</dbReference>
<dbReference type="InterPro" id="IPR018163">
    <property type="entry name" value="Thr/Ala-tRNA-synth_IIc_edit"/>
</dbReference>
<dbReference type="InterPro" id="IPR009000">
    <property type="entry name" value="Transl_B-barrel_sf"/>
</dbReference>
<dbReference type="InterPro" id="IPR012947">
    <property type="entry name" value="tRNA_SAD"/>
</dbReference>
<dbReference type="NCBIfam" id="TIGR03683">
    <property type="entry name" value="A-tRNA_syn_arch"/>
    <property type="match status" value="1"/>
</dbReference>
<dbReference type="NCBIfam" id="TIGR00344">
    <property type="entry name" value="alaS"/>
    <property type="match status" value="1"/>
</dbReference>
<dbReference type="PANTHER" id="PTHR11777:SF9">
    <property type="entry name" value="ALANINE--TRNA LIGASE, CYTOPLASMIC"/>
    <property type="match status" value="1"/>
</dbReference>
<dbReference type="PANTHER" id="PTHR11777">
    <property type="entry name" value="ALANYL-TRNA SYNTHETASE"/>
    <property type="match status" value="1"/>
</dbReference>
<dbReference type="Pfam" id="PF01411">
    <property type="entry name" value="tRNA-synt_2c"/>
    <property type="match status" value="1"/>
</dbReference>
<dbReference type="Pfam" id="PF07973">
    <property type="entry name" value="tRNA_SAD"/>
    <property type="match status" value="1"/>
</dbReference>
<dbReference type="PRINTS" id="PR00980">
    <property type="entry name" value="TRNASYNTHALA"/>
</dbReference>
<dbReference type="SMART" id="SM00863">
    <property type="entry name" value="tRNA_SAD"/>
    <property type="match status" value="1"/>
</dbReference>
<dbReference type="SUPFAM" id="SSF55681">
    <property type="entry name" value="Class II aaRS and biotin synthetases"/>
    <property type="match status" value="1"/>
</dbReference>
<dbReference type="SUPFAM" id="SSF101353">
    <property type="entry name" value="Putative anticodon-binding domain of alanyl-tRNA synthetase (AlaRS)"/>
    <property type="match status" value="1"/>
</dbReference>
<dbReference type="SUPFAM" id="SSF55186">
    <property type="entry name" value="ThrRS/AlaRS common domain"/>
    <property type="match status" value="1"/>
</dbReference>
<dbReference type="SUPFAM" id="SSF50447">
    <property type="entry name" value="Translation proteins"/>
    <property type="match status" value="1"/>
</dbReference>
<dbReference type="PROSITE" id="PS50860">
    <property type="entry name" value="AA_TRNA_LIGASE_II_ALA"/>
    <property type="match status" value="1"/>
</dbReference>
<accession>A8MBI2</accession>
<reference key="1">
    <citation type="submission" date="2007-10" db="EMBL/GenBank/DDBJ databases">
        <title>Complete sequence of Caldivirga maquilingensis IC-167.</title>
        <authorList>
            <consortium name="US DOE Joint Genome Institute"/>
            <person name="Copeland A."/>
            <person name="Lucas S."/>
            <person name="Lapidus A."/>
            <person name="Barry K."/>
            <person name="Glavina del Rio T."/>
            <person name="Dalin E."/>
            <person name="Tice H."/>
            <person name="Pitluck S."/>
            <person name="Saunders E."/>
            <person name="Brettin T."/>
            <person name="Bruce D."/>
            <person name="Detter J.C."/>
            <person name="Han C."/>
            <person name="Schmutz J."/>
            <person name="Larimer F."/>
            <person name="Land M."/>
            <person name="Hauser L."/>
            <person name="Kyrpides N."/>
            <person name="Ivanova N."/>
            <person name="Biddle J.F."/>
            <person name="Zhang Z."/>
            <person name="Fitz-Gibbon S.T."/>
            <person name="Lowe T.M."/>
            <person name="Saltikov C."/>
            <person name="House C.H."/>
            <person name="Richardson P."/>
        </authorList>
    </citation>
    <scope>NUCLEOTIDE SEQUENCE [LARGE SCALE GENOMIC DNA]</scope>
    <source>
        <strain>ATCC 700844 / DSM 13496 / JCM 10307 / IC-167</strain>
    </source>
</reference>
<sequence length="899" mass="101305">MPILNESLLRTRIFIGRGFRRSRCPYCGHHYWTLNPSQDNCGDQPCTPYGFIGNPPGTYRPESIKDVRERFLSFFEKRGHTRVARYPVVARWRNDVYLVGASIYDFQPWVTEGVVPPPANPLTISQPSIRLTDVDKVGRSGRHLTGFEMMAHHAFNFPGKEIYWINETVEYAHEFFTRELGFRDDEVTYKENIWEGGGNAGESFEVLVRGLELATLVFMHYRVIGDEYREMPIRIVDTGYGLERIYWVLTGKPTIYEAVFEGFLNKARQLLGLPKPDEKVLASLAIHMGQLDPEVLALDKAYVEVAKRIGIDSSELINFIKPQEALYVLADHSRTVSWMINDGVIPSNSGVGYLARLLIRRMLKYMHVIGAQVPLTEIFNTHLNYLINDYPELKESMQLILDLVDLEEAKYKSAISQLPKLISRIKGELTINDLINLYDSHGIPPEVVRDEAAKRGVKVNVPDNFYEMLAARHQKPAKGEEGNRLDVTADDVIDLPPTRELFYEDTYAFEGKAKVLKVIKGKYIVLDSTIFYPEGGGQPADRGVLRFNGVEAKVVDVQRVGPVIVHVIDGPTPGVGDVVEMRIDSERRLGLMRMHTGTHILLQSIRRVLGKHVWQAGAQKDIPLSRLDVTHYRLPTPDEVKRIEELANEVVLSDLPVKAELMPRNEAEAKYGFIIYQGGVVPGGEVRIVKVGEGNDTYDVEACGGTHLDRTSRIGLIKIVKVDKIQEGVIRFIFTTGKYALDYVRNLEGKLDSAASKLRVGRDEVDEAVDRLIKELNNAEERSRVLARKAIEADLANIVKSMITVSGFKVAVYYEDYWVRDYLQELASKYPGDVLVLIHGNEYQVYTNGKVKAIDVAKVLNELGGKGGGSGTFAQGVFNNPVKQDDVVNTIKRKLTLTQ</sequence>
<gene>
    <name evidence="1" type="primary">alaS</name>
    <name type="ordered locus">Cmaq_1898</name>
</gene>
<proteinExistence type="inferred from homology"/>
<feature type="chain" id="PRO_0000347877" description="Alanine--tRNA ligase">
    <location>
        <begin position="1"/>
        <end position="899"/>
    </location>
</feature>
<feature type="binding site" evidence="1">
    <location>
        <position position="595"/>
    </location>
    <ligand>
        <name>Zn(2+)</name>
        <dbReference type="ChEBI" id="CHEBI:29105"/>
    </ligand>
</feature>
<feature type="binding site" evidence="1">
    <location>
        <position position="599"/>
    </location>
    <ligand>
        <name>Zn(2+)</name>
        <dbReference type="ChEBI" id="CHEBI:29105"/>
    </ligand>
</feature>
<feature type="binding site" evidence="1">
    <location>
        <position position="703"/>
    </location>
    <ligand>
        <name>Zn(2+)</name>
        <dbReference type="ChEBI" id="CHEBI:29105"/>
    </ligand>
</feature>
<feature type="binding site" evidence="1">
    <location>
        <position position="707"/>
    </location>
    <ligand>
        <name>Zn(2+)</name>
        <dbReference type="ChEBI" id="CHEBI:29105"/>
    </ligand>
</feature>
<protein>
    <recommendedName>
        <fullName evidence="1">Alanine--tRNA ligase</fullName>
        <ecNumber evidence="1">6.1.1.7</ecNumber>
    </recommendedName>
    <alternativeName>
        <fullName evidence="1">Alanyl-tRNA synthetase</fullName>
        <shortName evidence="1">AlaRS</shortName>
    </alternativeName>
</protein>
<name>SYA_CALMQ</name>
<evidence type="ECO:0000255" key="1">
    <source>
        <dbReference type="HAMAP-Rule" id="MF_00036"/>
    </source>
</evidence>
<comment type="function">
    <text evidence="1">Catalyzes the attachment of alanine to tRNA(Ala) in a two-step reaction: alanine is first activated by ATP to form Ala-AMP and then transferred to the acceptor end of tRNA(Ala). Also edits incorrectly charged Ser-tRNA(Ala) and Gly-tRNA(Ala) via its editing domain.</text>
</comment>
<comment type="catalytic activity">
    <reaction evidence="1">
        <text>tRNA(Ala) + L-alanine + ATP = L-alanyl-tRNA(Ala) + AMP + diphosphate</text>
        <dbReference type="Rhea" id="RHEA:12540"/>
        <dbReference type="Rhea" id="RHEA-COMP:9657"/>
        <dbReference type="Rhea" id="RHEA-COMP:9923"/>
        <dbReference type="ChEBI" id="CHEBI:30616"/>
        <dbReference type="ChEBI" id="CHEBI:33019"/>
        <dbReference type="ChEBI" id="CHEBI:57972"/>
        <dbReference type="ChEBI" id="CHEBI:78442"/>
        <dbReference type="ChEBI" id="CHEBI:78497"/>
        <dbReference type="ChEBI" id="CHEBI:456215"/>
        <dbReference type="EC" id="6.1.1.7"/>
    </reaction>
</comment>
<comment type="cofactor">
    <cofactor evidence="1">
        <name>Zn(2+)</name>
        <dbReference type="ChEBI" id="CHEBI:29105"/>
    </cofactor>
    <text evidence="1">Binds 1 zinc ion per subunit.</text>
</comment>
<comment type="subcellular location">
    <subcellularLocation>
        <location evidence="1">Cytoplasm</location>
    </subcellularLocation>
</comment>
<comment type="domain">
    <text evidence="1">Consists of three domains; the N-terminal catalytic domain, the editing domain and the C-terminal C-Ala domain. The editing domain removes incorrectly charged amino acids, while the C-Ala domain, along with tRNA(Ala), serves as a bridge to cooperatively bring together the editing and aminoacylation centers thus stimulating deacylation of misacylated tRNAs.</text>
</comment>
<comment type="similarity">
    <text evidence="1">Belongs to the class-II aminoacyl-tRNA synthetase family.</text>
</comment>